<proteinExistence type="inferred from homology"/>
<reference key="1">
    <citation type="journal article" date="2004" name="Nat. Genet.">
        <title>Comparison of genome degradation in Paratyphi A and Typhi, human-restricted serovars of Salmonella enterica that cause typhoid.</title>
        <authorList>
            <person name="McClelland M."/>
            <person name="Sanderson K.E."/>
            <person name="Clifton S.W."/>
            <person name="Latreille P."/>
            <person name="Porwollik S."/>
            <person name="Sabo A."/>
            <person name="Meyer R."/>
            <person name="Bieri T."/>
            <person name="Ozersky P."/>
            <person name="McLellan M."/>
            <person name="Harkins C.R."/>
            <person name="Wang C."/>
            <person name="Nguyen C."/>
            <person name="Berghoff A."/>
            <person name="Elliott G."/>
            <person name="Kohlberg S."/>
            <person name="Strong C."/>
            <person name="Du F."/>
            <person name="Carter J."/>
            <person name="Kremizki C."/>
            <person name="Layman D."/>
            <person name="Leonard S."/>
            <person name="Sun H."/>
            <person name="Fulton L."/>
            <person name="Nash W."/>
            <person name="Miner T."/>
            <person name="Minx P."/>
            <person name="Delehaunty K."/>
            <person name="Fronick C."/>
            <person name="Magrini V."/>
            <person name="Nhan M."/>
            <person name="Warren W."/>
            <person name="Florea L."/>
            <person name="Spieth J."/>
            <person name="Wilson R.K."/>
        </authorList>
    </citation>
    <scope>NUCLEOTIDE SEQUENCE [LARGE SCALE GENOMIC DNA]</scope>
    <source>
        <strain>ATCC 9150 / SARB42</strain>
    </source>
</reference>
<name>RS2_SALPA</name>
<feature type="initiator methionine" description="Removed" evidence="1">
    <location>
        <position position="1"/>
    </location>
</feature>
<feature type="chain" id="PRO_0000134230" description="Small ribosomal subunit protein uS2">
    <location>
        <begin position="2"/>
        <end position="241"/>
    </location>
</feature>
<keyword id="KW-0687">Ribonucleoprotein</keyword>
<keyword id="KW-0689">Ribosomal protein</keyword>
<dbReference type="EMBL" id="CP000026">
    <property type="protein sequence ID" value="AAV76252.1"/>
    <property type="molecule type" value="Genomic_DNA"/>
</dbReference>
<dbReference type="RefSeq" id="WP_000246886.1">
    <property type="nucleotide sequence ID" value="NC_006511.1"/>
</dbReference>
<dbReference type="SMR" id="Q5PD63"/>
<dbReference type="KEGG" id="spt:SPA0223"/>
<dbReference type="HOGENOM" id="CLU_040318_1_0_6"/>
<dbReference type="Proteomes" id="UP000008185">
    <property type="component" value="Chromosome"/>
</dbReference>
<dbReference type="GO" id="GO:0022627">
    <property type="term" value="C:cytosolic small ribosomal subunit"/>
    <property type="evidence" value="ECO:0007669"/>
    <property type="project" value="TreeGrafter"/>
</dbReference>
<dbReference type="GO" id="GO:0003735">
    <property type="term" value="F:structural constituent of ribosome"/>
    <property type="evidence" value="ECO:0007669"/>
    <property type="project" value="InterPro"/>
</dbReference>
<dbReference type="GO" id="GO:0006412">
    <property type="term" value="P:translation"/>
    <property type="evidence" value="ECO:0007669"/>
    <property type="project" value="UniProtKB-UniRule"/>
</dbReference>
<dbReference type="CDD" id="cd01425">
    <property type="entry name" value="RPS2"/>
    <property type="match status" value="1"/>
</dbReference>
<dbReference type="FunFam" id="1.10.287.610:FF:000001">
    <property type="entry name" value="30S ribosomal protein S2"/>
    <property type="match status" value="1"/>
</dbReference>
<dbReference type="Gene3D" id="3.40.50.10490">
    <property type="entry name" value="Glucose-6-phosphate isomerase like protein, domain 1"/>
    <property type="match status" value="1"/>
</dbReference>
<dbReference type="Gene3D" id="1.10.287.610">
    <property type="entry name" value="Helix hairpin bin"/>
    <property type="match status" value="1"/>
</dbReference>
<dbReference type="HAMAP" id="MF_00291_B">
    <property type="entry name" value="Ribosomal_uS2_B"/>
    <property type="match status" value="1"/>
</dbReference>
<dbReference type="InterPro" id="IPR001865">
    <property type="entry name" value="Ribosomal_uS2"/>
</dbReference>
<dbReference type="InterPro" id="IPR005706">
    <property type="entry name" value="Ribosomal_uS2_bac/mit/plastid"/>
</dbReference>
<dbReference type="InterPro" id="IPR018130">
    <property type="entry name" value="Ribosomal_uS2_CS"/>
</dbReference>
<dbReference type="InterPro" id="IPR023591">
    <property type="entry name" value="Ribosomal_uS2_flav_dom_sf"/>
</dbReference>
<dbReference type="NCBIfam" id="TIGR01011">
    <property type="entry name" value="rpsB_bact"/>
    <property type="match status" value="1"/>
</dbReference>
<dbReference type="PANTHER" id="PTHR12534">
    <property type="entry name" value="30S RIBOSOMAL PROTEIN S2 PROKARYOTIC AND ORGANELLAR"/>
    <property type="match status" value="1"/>
</dbReference>
<dbReference type="PANTHER" id="PTHR12534:SF0">
    <property type="entry name" value="SMALL RIBOSOMAL SUBUNIT PROTEIN US2M"/>
    <property type="match status" value="1"/>
</dbReference>
<dbReference type="Pfam" id="PF00318">
    <property type="entry name" value="Ribosomal_S2"/>
    <property type="match status" value="1"/>
</dbReference>
<dbReference type="PRINTS" id="PR00395">
    <property type="entry name" value="RIBOSOMALS2"/>
</dbReference>
<dbReference type="SUPFAM" id="SSF52313">
    <property type="entry name" value="Ribosomal protein S2"/>
    <property type="match status" value="1"/>
</dbReference>
<dbReference type="PROSITE" id="PS00962">
    <property type="entry name" value="RIBOSOMAL_S2_1"/>
    <property type="match status" value="1"/>
</dbReference>
<dbReference type="PROSITE" id="PS00963">
    <property type="entry name" value="RIBOSOMAL_S2_2"/>
    <property type="match status" value="1"/>
</dbReference>
<accession>Q5PD63</accession>
<comment type="similarity">
    <text evidence="2">Belongs to the universal ribosomal protein uS2 family.</text>
</comment>
<protein>
    <recommendedName>
        <fullName evidence="2">Small ribosomal subunit protein uS2</fullName>
    </recommendedName>
    <alternativeName>
        <fullName evidence="3">30S ribosomal protein S2</fullName>
    </alternativeName>
</protein>
<gene>
    <name evidence="2" type="primary">rpsB</name>
    <name type="ordered locus">SPA0223</name>
</gene>
<evidence type="ECO:0000250" key="1"/>
<evidence type="ECO:0000255" key="2">
    <source>
        <dbReference type="HAMAP-Rule" id="MF_00291"/>
    </source>
</evidence>
<evidence type="ECO:0000305" key="3"/>
<organism>
    <name type="scientific">Salmonella paratyphi A (strain ATCC 9150 / SARB42)</name>
    <dbReference type="NCBI Taxonomy" id="295319"/>
    <lineage>
        <taxon>Bacteria</taxon>
        <taxon>Pseudomonadati</taxon>
        <taxon>Pseudomonadota</taxon>
        <taxon>Gammaproteobacteria</taxon>
        <taxon>Enterobacterales</taxon>
        <taxon>Enterobacteriaceae</taxon>
        <taxon>Salmonella</taxon>
    </lineage>
</organism>
<sequence>MATVSMRDMLKAGVHFGHQTRYWNPKMKPFIFGARNKVHIINLEKTVPMFNEALAELNKISARKGKILFVGTKRAASEAVKEAANSCDQFFVNHRWLGGMLTNWKTVRQSIKRLKDLETQSQDGTFEKLTKKEALMRTRELEKLENSLGGIKDMGGLPDALFVIDADHEHIAIKEANNLGIPVFAIVDTNSDPDGVDFVIPGNDDAIRAVSLYLGAVAATVREGRSQDLASQAEESFVEAE</sequence>